<comment type="catalytic activity">
    <reaction evidence="1">
        <text>tRNA(Phe) + L-phenylalanine + ATP = L-phenylalanyl-tRNA(Phe) + AMP + diphosphate + H(+)</text>
        <dbReference type="Rhea" id="RHEA:19413"/>
        <dbReference type="Rhea" id="RHEA-COMP:9668"/>
        <dbReference type="Rhea" id="RHEA-COMP:9699"/>
        <dbReference type="ChEBI" id="CHEBI:15378"/>
        <dbReference type="ChEBI" id="CHEBI:30616"/>
        <dbReference type="ChEBI" id="CHEBI:33019"/>
        <dbReference type="ChEBI" id="CHEBI:58095"/>
        <dbReference type="ChEBI" id="CHEBI:78442"/>
        <dbReference type="ChEBI" id="CHEBI:78531"/>
        <dbReference type="ChEBI" id="CHEBI:456215"/>
        <dbReference type="EC" id="6.1.1.20"/>
    </reaction>
</comment>
<comment type="cofactor">
    <cofactor evidence="1">
        <name>Mg(2+)</name>
        <dbReference type="ChEBI" id="CHEBI:18420"/>
    </cofactor>
</comment>
<comment type="subunit">
    <text evidence="1">Tetramer of two alpha and two beta subunits.</text>
</comment>
<comment type="subcellular location">
    <subcellularLocation>
        <location evidence="1">Cytoplasm</location>
    </subcellularLocation>
</comment>
<comment type="similarity">
    <text evidence="1">Belongs to the phenylalanyl-tRNA synthetase beta subunit family. Type 2 subfamily.</text>
</comment>
<proteinExistence type="inferred from homology"/>
<protein>
    <recommendedName>
        <fullName evidence="1">Phenylalanine--tRNA ligase beta subunit</fullName>
        <ecNumber evidence="1">6.1.1.20</ecNumber>
    </recommendedName>
    <alternativeName>
        <fullName evidence="1">Phenylalanyl-tRNA synthetase beta subunit</fullName>
        <shortName evidence="1">PheRS</shortName>
    </alternativeName>
</protein>
<sequence length="564" mass="64137">MPKVEIYKSILLEKIGKNLTNYELESIIETAKAEICEIDIVNDKIKIEFNDTNRPDLWSSAGLARHIKTYLSGNVPSFDFFSMTDNLQKFYGEIFVSPEVFGIRPFIFGFLAKGMICDERMLESLIQLQEKLSHNYGQKRKRIAMGMYSSNLIHFPINYVTCSSDYKFVPLGMDIEMSIKEINERHPKGIEYSSIFENVDQYSLLLDYKNNVLSYPPIINSRDIGTLKVGDTNLFIEVTGTDLEATLLSLSIVACDLYDMGFKILPVKTVFPRETLFGKEIICPYYFQNSLKINVDSVNKLLGSNFTANDMCLDLKKLGISAYFEESDTFYIMPPVYRNDFLHEVDVIEEVMIGKGLDNFKSELPKDFTIGKLSPIEEFSRSVRNLMIGMGFQEMIYNYLGSKVDFIEKMNIKGSELLSVSNPMTESYEYIRGSIIPDLLKSESISSNFPYPHKIFEIGKVALKDLVSDEGTVTYDNLAFLMADKEFSFNEINSLVSSLFYYLNIGFKVKESSKNLYIDGRGADILVNDIVLGCFGEVSPYILNNFGIMVPCCVLEININGLLN</sequence>
<evidence type="ECO:0000255" key="1">
    <source>
        <dbReference type="HAMAP-Rule" id="MF_00284"/>
    </source>
</evidence>
<accession>B5RPL7</accession>
<keyword id="KW-0030">Aminoacyl-tRNA synthetase</keyword>
<keyword id="KW-0067">ATP-binding</keyword>
<keyword id="KW-0963">Cytoplasm</keyword>
<keyword id="KW-0436">Ligase</keyword>
<keyword id="KW-0460">Magnesium</keyword>
<keyword id="KW-0479">Metal-binding</keyword>
<keyword id="KW-0547">Nucleotide-binding</keyword>
<keyword id="KW-0648">Protein biosynthesis</keyword>
<organism>
    <name type="scientific">Borrelia recurrentis (strain A1)</name>
    <dbReference type="NCBI Taxonomy" id="412418"/>
    <lineage>
        <taxon>Bacteria</taxon>
        <taxon>Pseudomonadati</taxon>
        <taxon>Spirochaetota</taxon>
        <taxon>Spirochaetia</taxon>
        <taxon>Spirochaetales</taxon>
        <taxon>Borreliaceae</taxon>
        <taxon>Borrelia</taxon>
    </lineage>
</organism>
<feature type="chain" id="PRO_1000114942" description="Phenylalanine--tRNA ligase beta subunit">
    <location>
        <begin position="1"/>
        <end position="564"/>
    </location>
</feature>
<feature type="domain" description="B5" evidence="1">
    <location>
        <begin position="286"/>
        <end position="362"/>
    </location>
</feature>
<feature type="binding site" evidence="1">
    <location>
        <position position="340"/>
    </location>
    <ligand>
        <name>Mg(2+)</name>
        <dbReference type="ChEBI" id="CHEBI:18420"/>
        <note>shared with alpha subunit</note>
    </ligand>
</feature>
<feature type="binding site" evidence="1">
    <location>
        <position position="346"/>
    </location>
    <ligand>
        <name>Mg(2+)</name>
        <dbReference type="ChEBI" id="CHEBI:18420"/>
        <note>shared with alpha subunit</note>
    </ligand>
</feature>
<feature type="binding site" evidence="1">
    <location>
        <position position="349"/>
    </location>
    <ligand>
        <name>Mg(2+)</name>
        <dbReference type="ChEBI" id="CHEBI:18420"/>
        <note>shared with alpha subunit</note>
    </ligand>
</feature>
<feature type="binding site" evidence="1">
    <location>
        <position position="350"/>
    </location>
    <ligand>
        <name>Mg(2+)</name>
        <dbReference type="ChEBI" id="CHEBI:18420"/>
        <note>shared with alpha subunit</note>
    </ligand>
</feature>
<dbReference type="EC" id="6.1.1.20" evidence="1"/>
<dbReference type="EMBL" id="CP000993">
    <property type="protein sequence ID" value="ACH94751.1"/>
    <property type="molecule type" value="Genomic_DNA"/>
</dbReference>
<dbReference type="RefSeq" id="WP_012538951.1">
    <property type="nucleotide sequence ID" value="NC_011244.1"/>
</dbReference>
<dbReference type="SMR" id="B5RPL7"/>
<dbReference type="KEGG" id="bre:BRE_519"/>
<dbReference type="HOGENOM" id="CLU_020279_3_0_12"/>
<dbReference type="Proteomes" id="UP000000612">
    <property type="component" value="Chromosome"/>
</dbReference>
<dbReference type="GO" id="GO:0009328">
    <property type="term" value="C:phenylalanine-tRNA ligase complex"/>
    <property type="evidence" value="ECO:0007669"/>
    <property type="project" value="TreeGrafter"/>
</dbReference>
<dbReference type="GO" id="GO:0005524">
    <property type="term" value="F:ATP binding"/>
    <property type="evidence" value="ECO:0007669"/>
    <property type="project" value="UniProtKB-UniRule"/>
</dbReference>
<dbReference type="GO" id="GO:0000287">
    <property type="term" value="F:magnesium ion binding"/>
    <property type="evidence" value="ECO:0007669"/>
    <property type="project" value="InterPro"/>
</dbReference>
<dbReference type="GO" id="GO:0004826">
    <property type="term" value="F:phenylalanine-tRNA ligase activity"/>
    <property type="evidence" value="ECO:0007669"/>
    <property type="project" value="UniProtKB-UniRule"/>
</dbReference>
<dbReference type="GO" id="GO:0003723">
    <property type="term" value="F:RNA binding"/>
    <property type="evidence" value="ECO:0007669"/>
    <property type="project" value="InterPro"/>
</dbReference>
<dbReference type="GO" id="GO:0006432">
    <property type="term" value="P:phenylalanyl-tRNA aminoacylation"/>
    <property type="evidence" value="ECO:0007669"/>
    <property type="project" value="UniProtKB-UniRule"/>
</dbReference>
<dbReference type="CDD" id="cd00769">
    <property type="entry name" value="PheRS_beta_core"/>
    <property type="match status" value="1"/>
</dbReference>
<dbReference type="Gene3D" id="3.30.56.10">
    <property type="match status" value="2"/>
</dbReference>
<dbReference type="Gene3D" id="3.30.930.10">
    <property type="entry name" value="Bira Bifunctional Protein, Domain 2"/>
    <property type="match status" value="1"/>
</dbReference>
<dbReference type="Gene3D" id="3.50.40.10">
    <property type="entry name" value="Phenylalanyl-trna Synthetase, Chain B, domain 3"/>
    <property type="match status" value="1"/>
</dbReference>
<dbReference type="HAMAP" id="MF_00284">
    <property type="entry name" value="Phe_tRNA_synth_beta2"/>
    <property type="match status" value="1"/>
</dbReference>
<dbReference type="InterPro" id="IPR045864">
    <property type="entry name" value="aa-tRNA-synth_II/BPL/LPL"/>
</dbReference>
<dbReference type="InterPro" id="IPR009061">
    <property type="entry name" value="DNA-bd_dom_put_sf"/>
</dbReference>
<dbReference type="InterPro" id="IPR045060">
    <property type="entry name" value="Phe-tRNA-ligase_IIc_bsu"/>
</dbReference>
<dbReference type="InterPro" id="IPR004531">
    <property type="entry name" value="Phe-tRNA-synth_IIc_bsu_arc_euk"/>
</dbReference>
<dbReference type="InterPro" id="IPR020825">
    <property type="entry name" value="Phe-tRNA_synthase-like_B3/B4"/>
</dbReference>
<dbReference type="InterPro" id="IPR022918">
    <property type="entry name" value="Phe_tRNA_ligase_beta2_arc"/>
</dbReference>
<dbReference type="InterPro" id="IPR041616">
    <property type="entry name" value="PheRS_beta_core"/>
</dbReference>
<dbReference type="InterPro" id="IPR005147">
    <property type="entry name" value="tRNA_synthase_B5-dom"/>
</dbReference>
<dbReference type="NCBIfam" id="TIGR00471">
    <property type="entry name" value="pheT_arch"/>
    <property type="match status" value="1"/>
</dbReference>
<dbReference type="PANTHER" id="PTHR10947:SF0">
    <property type="entry name" value="PHENYLALANINE--TRNA LIGASE BETA SUBUNIT"/>
    <property type="match status" value="1"/>
</dbReference>
<dbReference type="PANTHER" id="PTHR10947">
    <property type="entry name" value="PHENYLALANYL-TRNA SYNTHETASE BETA CHAIN AND LEUCINE-RICH REPEAT-CONTAINING PROTEIN 47"/>
    <property type="match status" value="1"/>
</dbReference>
<dbReference type="Pfam" id="PF03484">
    <property type="entry name" value="B5"/>
    <property type="match status" value="1"/>
</dbReference>
<dbReference type="Pfam" id="PF17759">
    <property type="entry name" value="tRNA_synthFbeta"/>
    <property type="match status" value="1"/>
</dbReference>
<dbReference type="SMART" id="SM00874">
    <property type="entry name" value="B5"/>
    <property type="match status" value="1"/>
</dbReference>
<dbReference type="SUPFAM" id="SSF55681">
    <property type="entry name" value="Class II aaRS and biotin synthetases"/>
    <property type="match status" value="1"/>
</dbReference>
<dbReference type="SUPFAM" id="SSF46955">
    <property type="entry name" value="Putative DNA-binding domain"/>
    <property type="match status" value="1"/>
</dbReference>
<dbReference type="PROSITE" id="PS51483">
    <property type="entry name" value="B5"/>
    <property type="match status" value="1"/>
</dbReference>
<reference key="1">
    <citation type="journal article" date="2008" name="PLoS Genet.">
        <title>The genome of Borrelia recurrentis, the agent of deadly louse-borne relapsing fever, is a degraded subset of tick-borne Borrelia duttonii.</title>
        <authorList>
            <person name="Lescot M."/>
            <person name="Audic S."/>
            <person name="Robert C."/>
            <person name="Nguyen T.T."/>
            <person name="Blanc G."/>
            <person name="Cutler S.J."/>
            <person name="Wincker P."/>
            <person name="Couloux A."/>
            <person name="Claverie J.-M."/>
            <person name="Raoult D."/>
            <person name="Drancourt M."/>
        </authorList>
    </citation>
    <scope>NUCLEOTIDE SEQUENCE [LARGE SCALE GENOMIC DNA]</scope>
    <source>
        <strain>A1</strain>
    </source>
</reference>
<name>SYFB_BORRA</name>
<gene>
    <name evidence="1" type="primary">pheT</name>
    <name type="ordered locus">BRE_519</name>
</gene>